<reference key="1">
    <citation type="journal article" date="2005" name="J. Bacteriol.">
        <title>Insights into genome plasticity and pathogenicity of the plant pathogenic Bacterium Xanthomonas campestris pv. vesicatoria revealed by the complete genome sequence.</title>
        <authorList>
            <person name="Thieme F."/>
            <person name="Koebnik R."/>
            <person name="Bekel T."/>
            <person name="Berger C."/>
            <person name="Boch J."/>
            <person name="Buettner D."/>
            <person name="Caldana C."/>
            <person name="Gaigalat L."/>
            <person name="Goesmann A."/>
            <person name="Kay S."/>
            <person name="Kirchner O."/>
            <person name="Lanz C."/>
            <person name="Linke B."/>
            <person name="McHardy A.C."/>
            <person name="Meyer F."/>
            <person name="Mittenhuber G."/>
            <person name="Nies D.H."/>
            <person name="Niesbach-Kloesgen U."/>
            <person name="Patschkowski T."/>
            <person name="Rueckert C."/>
            <person name="Rupp O."/>
            <person name="Schneiker S."/>
            <person name="Schuster S.C."/>
            <person name="Vorhoelter F.J."/>
            <person name="Weber E."/>
            <person name="Puehler A."/>
            <person name="Bonas U."/>
            <person name="Bartels D."/>
            <person name="Kaiser O."/>
        </authorList>
    </citation>
    <scope>NUCLEOTIDE SEQUENCE [LARGE SCALE GENOMIC DNA]</scope>
    <source>
        <strain>85-10</strain>
    </source>
</reference>
<keyword id="KW-0067">ATP-binding</keyword>
<keyword id="KW-0342">GTP-binding</keyword>
<keyword id="KW-0547">Nucleotide-binding</keyword>
<name>Y3122_XANE5</name>
<organism>
    <name type="scientific">Xanthomonas euvesicatoria pv. vesicatoria (strain 85-10)</name>
    <name type="common">Xanthomonas campestris pv. vesicatoria</name>
    <dbReference type="NCBI Taxonomy" id="316273"/>
    <lineage>
        <taxon>Bacteria</taxon>
        <taxon>Pseudomonadati</taxon>
        <taxon>Pseudomonadota</taxon>
        <taxon>Gammaproteobacteria</taxon>
        <taxon>Lysobacterales</taxon>
        <taxon>Lysobacteraceae</taxon>
        <taxon>Xanthomonas</taxon>
    </lineage>
</organism>
<proteinExistence type="inferred from homology"/>
<accession>Q3BQW0</accession>
<dbReference type="EMBL" id="AM039952">
    <property type="protein sequence ID" value="CAJ24853.1"/>
    <property type="status" value="ALT_INIT"/>
    <property type="molecule type" value="Genomic_DNA"/>
</dbReference>
<dbReference type="SMR" id="Q3BQW0"/>
<dbReference type="STRING" id="456327.BJD11_07215"/>
<dbReference type="KEGG" id="xcv:XCV3122"/>
<dbReference type="eggNOG" id="COG1660">
    <property type="taxonomic scope" value="Bacteria"/>
</dbReference>
<dbReference type="HOGENOM" id="CLU_059558_1_1_6"/>
<dbReference type="Proteomes" id="UP000007069">
    <property type="component" value="Chromosome"/>
</dbReference>
<dbReference type="GO" id="GO:0005524">
    <property type="term" value="F:ATP binding"/>
    <property type="evidence" value="ECO:0007669"/>
    <property type="project" value="UniProtKB-UniRule"/>
</dbReference>
<dbReference type="GO" id="GO:0005525">
    <property type="term" value="F:GTP binding"/>
    <property type="evidence" value="ECO:0007669"/>
    <property type="project" value="UniProtKB-UniRule"/>
</dbReference>
<dbReference type="HAMAP" id="MF_00636">
    <property type="entry name" value="RapZ_like"/>
    <property type="match status" value="1"/>
</dbReference>
<dbReference type="InterPro" id="IPR027417">
    <property type="entry name" value="P-loop_NTPase"/>
</dbReference>
<dbReference type="InterPro" id="IPR005337">
    <property type="entry name" value="RapZ-like"/>
</dbReference>
<dbReference type="InterPro" id="IPR053930">
    <property type="entry name" value="RapZ-like_N"/>
</dbReference>
<dbReference type="InterPro" id="IPR053931">
    <property type="entry name" value="RapZ_C"/>
</dbReference>
<dbReference type="NCBIfam" id="NF003828">
    <property type="entry name" value="PRK05416.1"/>
    <property type="match status" value="1"/>
</dbReference>
<dbReference type="PANTHER" id="PTHR30448">
    <property type="entry name" value="RNASE ADAPTER PROTEIN RAPZ"/>
    <property type="match status" value="1"/>
</dbReference>
<dbReference type="PANTHER" id="PTHR30448:SF0">
    <property type="entry name" value="RNASE ADAPTER PROTEIN RAPZ"/>
    <property type="match status" value="1"/>
</dbReference>
<dbReference type="Pfam" id="PF22740">
    <property type="entry name" value="PapZ_C"/>
    <property type="match status" value="1"/>
</dbReference>
<dbReference type="Pfam" id="PF03668">
    <property type="entry name" value="RapZ-like_N"/>
    <property type="match status" value="1"/>
</dbReference>
<dbReference type="PIRSF" id="PIRSF005052">
    <property type="entry name" value="P-loopkin"/>
    <property type="match status" value="1"/>
</dbReference>
<dbReference type="SUPFAM" id="SSF52540">
    <property type="entry name" value="P-loop containing nucleoside triphosphate hydrolases"/>
    <property type="match status" value="1"/>
</dbReference>
<gene>
    <name type="ordered locus">XCV3122</name>
</gene>
<feature type="chain" id="PRO_0000259017" description="Nucleotide-binding protein XCV3122">
    <location>
        <begin position="1"/>
        <end position="282"/>
    </location>
</feature>
<feature type="binding site" evidence="1">
    <location>
        <begin position="5"/>
        <end position="12"/>
    </location>
    <ligand>
        <name>ATP</name>
        <dbReference type="ChEBI" id="CHEBI:30616"/>
    </ligand>
</feature>
<feature type="binding site" evidence="1">
    <location>
        <begin position="57"/>
        <end position="60"/>
    </location>
    <ligand>
        <name>GTP</name>
        <dbReference type="ChEBI" id="CHEBI:37565"/>
    </ligand>
</feature>
<comment type="function">
    <text evidence="1">Displays ATPase and GTPase activities.</text>
</comment>
<comment type="similarity">
    <text evidence="1">Belongs to the RapZ-like family.</text>
</comment>
<comment type="sequence caution" evidence="2">
    <conflict type="erroneous initiation">
        <sequence resource="EMBL-CDS" id="CAJ24853"/>
    </conflict>
</comment>
<sequence>MIVSGLSGSGKSVALKTFEDLDYYCSDNLPVELLPDFVKSRLRGNPIGDQRLAVGIDVRSRSDLTQLAQWRQAAQEYGIEARLLFFEASDEALIKRYADTRRRHPLSHLGLALPEAITRERQLTEPLRTQADAVIDTSTLNVHQLRRRVVTEFALGSHDRLSLLFESFAYKRGVPAEADFVFDARVLPNPHWDPELRPLTGRDAGVRDYLDNEADVQRYSAQIVDLLDTWLPRLRNDTRSYVTIAFGCTGGKHRSVYMAERMARHAREQGWPEVATFHREQD</sequence>
<evidence type="ECO:0000255" key="1">
    <source>
        <dbReference type="HAMAP-Rule" id="MF_00636"/>
    </source>
</evidence>
<evidence type="ECO:0000305" key="2"/>
<protein>
    <recommendedName>
        <fullName evidence="1">Nucleotide-binding protein XCV3122</fullName>
    </recommendedName>
</protein>